<gene>
    <name type="primary">Mrps5</name>
</gene>
<reference key="1">
    <citation type="journal article" date="2001" name="J. Biol. Chem.">
        <title>Proteomic analysis of the mammalian mitochondrial ribosome. Identification of protein components in the 28S small subunit.</title>
        <authorList>
            <person name="Suzuki T."/>
            <person name="Terasaki M."/>
            <person name="Takemoto-Hori C."/>
            <person name="Hanada T."/>
            <person name="Ueda T."/>
            <person name="Wada A."/>
            <person name="Watanabe K."/>
        </authorList>
    </citation>
    <scope>NUCLEOTIDE SEQUENCE [MRNA]</scope>
</reference>
<reference key="2">
    <citation type="journal article" date="2005" name="Science">
        <title>The transcriptional landscape of the mammalian genome.</title>
        <authorList>
            <person name="Carninci P."/>
            <person name="Kasukawa T."/>
            <person name="Katayama S."/>
            <person name="Gough J."/>
            <person name="Frith M.C."/>
            <person name="Maeda N."/>
            <person name="Oyama R."/>
            <person name="Ravasi T."/>
            <person name="Lenhard B."/>
            <person name="Wells C."/>
            <person name="Kodzius R."/>
            <person name="Shimokawa K."/>
            <person name="Bajic V.B."/>
            <person name="Brenner S.E."/>
            <person name="Batalov S."/>
            <person name="Forrest A.R."/>
            <person name="Zavolan M."/>
            <person name="Davis M.J."/>
            <person name="Wilming L.G."/>
            <person name="Aidinis V."/>
            <person name="Allen J.E."/>
            <person name="Ambesi-Impiombato A."/>
            <person name="Apweiler R."/>
            <person name="Aturaliya R.N."/>
            <person name="Bailey T.L."/>
            <person name="Bansal M."/>
            <person name="Baxter L."/>
            <person name="Beisel K.W."/>
            <person name="Bersano T."/>
            <person name="Bono H."/>
            <person name="Chalk A.M."/>
            <person name="Chiu K.P."/>
            <person name="Choudhary V."/>
            <person name="Christoffels A."/>
            <person name="Clutterbuck D.R."/>
            <person name="Crowe M.L."/>
            <person name="Dalla E."/>
            <person name="Dalrymple B.P."/>
            <person name="de Bono B."/>
            <person name="Della Gatta G."/>
            <person name="di Bernardo D."/>
            <person name="Down T."/>
            <person name="Engstrom P."/>
            <person name="Fagiolini M."/>
            <person name="Faulkner G."/>
            <person name="Fletcher C.F."/>
            <person name="Fukushima T."/>
            <person name="Furuno M."/>
            <person name="Futaki S."/>
            <person name="Gariboldi M."/>
            <person name="Georgii-Hemming P."/>
            <person name="Gingeras T.R."/>
            <person name="Gojobori T."/>
            <person name="Green R.E."/>
            <person name="Gustincich S."/>
            <person name="Harbers M."/>
            <person name="Hayashi Y."/>
            <person name="Hensch T.K."/>
            <person name="Hirokawa N."/>
            <person name="Hill D."/>
            <person name="Huminiecki L."/>
            <person name="Iacono M."/>
            <person name="Ikeo K."/>
            <person name="Iwama A."/>
            <person name="Ishikawa T."/>
            <person name="Jakt M."/>
            <person name="Kanapin A."/>
            <person name="Katoh M."/>
            <person name="Kawasawa Y."/>
            <person name="Kelso J."/>
            <person name="Kitamura H."/>
            <person name="Kitano H."/>
            <person name="Kollias G."/>
            <person name="Krishnan S.P."/>
            <person name="Kruger A."/>
            <person name="Kummerfeld S.K."/>
            <person name="Kurochkin I.V."/>
            <person name="Lareau L.F."/>
            <person name="Lazarevic D."/>
            <person name="Lipovich L."/>
            <person name="Liu J."/>
            <person name="Liuni S."/>
            <person name="McWilliam S."/>
            <person name="Madan Babu M."/>
            <person name="Madera M."/>
            <person name="Marchionni L."/>
            <person name="Matsuda H."/>
            <person name="Matsuzawa S."/>
            <person name="Miki H."/>
            <person name="Mignone F."/>
            <person name="Miyake S."/>
            <person name="Morris K."/>
            <person name="Mottagui-Tabar S."/>
            <person name="Mulder N."/>
            <person name="Nakano N."/>
            <person name="Nakauchi H."/>
            <person name="Ng P."/>
            <person name="Nilsson R."/>
            <person name="Nishiguchi S."/>
            <person name="Nishikawa S."/>
            <person name="Nori F."/>
            <person name="Ohara O."/>
            <person name="Okazaki Y."/>
            <person name="Orlando V."/>
            <person name="Pang K.C."/>
            <person name="Pavan W.J."/>
            <person name="Pavesi G."/>
            <person name="Pesole G."/>
            <person name="Petrovsky N."/>
            <person name="Piazza S."/>
            <person name="Reed J."/>
            <person name="Reid J.F."/>
            <person name="Ring B.Z."/>
            <person name="Ringwald M."/>
            <person name="Rost B."/>
            <person name="Ruan Y."/>
            <person name="Salzberg S.L."/>
            <person name="Sandelin A."/>
            <person name="Schneider C."/>
            <person name="Schoenbach C."/>
            <person name="Sekiguchi K."/>
            <person name="Semple C.A."/>
            <person name="Seno S."/>
            <person name="Sessa L."/>
            <person name="Sheng Y."/>
            <person name="Shibata Y."/>
            <person name="Shimada H."/>
            <person name="Shimada K."/>
            <person name="Silva D."/>
            <person name="Sinclair B."/>
            <person name="Sperling S."/>
            <person name="Stupka E."/>
            <person name="Sugiura K."/>
            <person name="Sultana R."/>
            <person name="Takenaka Y."/>
            <person name="Taki K."/>
            <person name="Tammoja K."/>
            <person name="Tan S.L."/>
            <person name="Tang S."/>
            <person name="Taylor M.S."/>
            <person name="Tegner J."/>
            <person name="Teichmann S.A."/>
            <person name="Ueda H.R."/>
            <person name="van Nimwegen E."/>
            <person name="Verardo R."/>
            <person name="Wei C.L."/>
            <person name="Yagi K."/>
            <person name="Yamanishi H."/>
            <person name="Zabarovsky E."/>
            <person name="Zhu S."/>
            <person name="Zimmer A."/>
            <person name="Hide W."/>
            <person name="Bult C."/>
            <person name="Grimmond S.M."/>
            <person name="Teasdale R.D."/>
            <person name="Liu E.T."/>
            <person name="Brusic V."/>
            <person name="Quackenbush J."/>
            <person name="Wahlestedt C."/>
            <person name="Mattick J.S."/>
            <person name="Hume D.A."/>
            <person name="Kai C."/>
            <person name="Sasaki D."/>
            <person name="Tomaru Y."/>
            <person name="Fukuda S."/>
            <person name="Kanamori-Katayama M."/>
            <person name="Suzuki M."/>
            <person name="Aoki J."/>
            <person name="Arakawa T."/>
            <person name="Iida J."/>
            <person name="Imamura K."/>
            <person name="Itoh M."/>
            <person name="Kato T."/>
            <person name="Kawaji H."/>
            <person name="Kawagashira N."/>
            <person name="Kawashima T."/>
            <person name="Kojima M."/>
            <person name="Kondo S."/>
            <person name="Konno H."/>
            <person name="Nakano K."/>
            <person name="Ninomiya N."/>
            <person name="Nishio T."/>
            <person name="Okada M."/>
            <person name="Plessy C."/>
            <person name="Shibata K."/>
            <person name="Shiraki T."/>
            <person name="Suzuki S."/>
            <person name="Tagami M."/>
            <person name="Waki K."/>
            <person name="Watahiki A."/>
            <person name="Okamura-Oho Y."/>
            <person name="Suzuki H."/>
            <person name="Kawai J."/>
            <person name="Hayashizaki Y."/>
        </authorList>
    </citation>
    <scope>NUCLEOTIDE SEQUENCE [LARGE SCALE MRNA]</scope>
    <source>
        <strain>C57BL/6J</strain>
        <tissue>Thymus</tissue>
    </source>
</reference>
<reference key="3">
    <citation type="journal article" date="2004" name="Genome Res.">
        <title>The status, quality, and expansion of the NIH full-length cDNA project: the Mammalian Gene Collection (MGC).</title>
        <authorList>
            <consortium name="The MGC Project Team"/>
        </authorList>
    </citation>
    <scope>NUCLEOTIDE SEQUENCE [LARGE SCALE MRNA]</scope>
    <source>
        <tissue>Liver</tissue>
    </source>
</reference>
<reference key="4">
    <citation type="journal article" date="2010" name="Cell">
        <title>A tissue-specific atlas of mouse protein phosphorylation and expression.</title>
        <authorList>
            <person name="Huttlin E.L."/>
            <person name="Jedrychowski M.P."/>
            <person name="Elias J.E."/>
            <person name="Goswami T."/>
            <person name="Rad R."/>
            <person name="Beausoleil S.A."/>
            <person name="Villen J."/>
            <person name="Haas W."/>
            <person name="Sowa M.E."/>
            <person name="Gygi S.P."/>
        </authorList>
    </citation>
    <scope>IDENTIFICATION BY MASS SPECTROMETRY [LARGE SCALE ANALYSIS]</scope>
    <source>
        <tissue>Brain</tissue>
        <tissue>Brown adipose tissue</tissue>
        <tissue>Heart</tissue>
        <tissue>Kidney</tissue>
        <tissue>Liver</tissue>
        <tissue>Testis</tissue>
    </source>
</reference>
<proteinExistence type="evidence at protein level"/>
<name>RT05_MOUSE</name>
<protein>
    <recommendedName>
        <fullName evidence="4">Small ribosomal subunit protein uS5m</fullName>
    </recommendedName>
    <alternativeName>
        <fullName>28S ribosomal protein S5, mitochondrial</fullName>
        <shortName>MRP-S5</shortName>
        <shortName>S5mt</shortName>
    </alternativeName>
</protein>
<evidence type="ECO:0000250" key="1">
    <source>
        <dbReference type="UniProtKB" id="P82675"/>
    </source>
</evidence>
<evidence type="ECO:0000255" key="2">
    <source>
        <dbReference type="PROSITE-ProRule" id="PRU00268"/>
    </source>
</evidence>
<evidence type="ECO:0000256" key="3">
    <source>
        <dbReference type="SAM" id="MobiDB-lite"/>
    </source>
</evidence>
<evidence type="ECO:0000305" key="4"/>
<organism>
    <name type="scientific">Mus musculus</name>
    <name type="common">Mouse</name>
    <dbReference type="NCBI Taxonomy" id="10090"/>
    <lineage>
        <taxon>Eukaryota</taxon>
        <taxon>Metazoa</taxon>
        <taxon>Chordata</taxon>
        <taxon>Craniata</taxon>
        <taxon>Vertebrata</taxon>
        <taxon>Euteleostomi</taxon>
        <taxon>Mammalia</taxon>
        <taxon>Eutheria</taxon>
        <taxon>Euarchontoglires</taxon>
        <taxon>Glires</taxon>
        <taxon>Rodentia</taxon>
        <taxon>Myomorpha</taxon>
        <taxon>Muroidea</taxon>
        <taxon>Muridae</taxon>
        <taxon>Murinae</taxon>
        <taxon>Mus</taxon>
        <taxon>Mus</taxon>
    </lineage>
</organism>
<keyword id="KW-0002">3D-structure</keyword>
<keyword id="KW-0496">Mitochondrion</keyword>
<keyword id="KW-1185">Reference proteome</keyword>
<keyword id="KW-0687">Ribonucleoprotein</keyword>
<keyword id="KW-0689">Ribosomal protein</keyword>
<feature type="chain" id="PRO_0000131686" description="Small ribosomal subunit protein uS5m">
    <location>
        <begin position="1"/>
        <end position="432"/>
    </location>
</feature>
<feature type="domain" description="S5 DRBM" evidence="2">
    <location>
        <begin position="220"/>
        <end position="284"/>
    </location>
</feature>
<feature type="region of interest" description="Disordered" evidence="3">
    <location>
        <begin position="110"/>
        <end position="130"/>
    </location>
</feature>
<feature type="compositionally biased region" description="Basic residues" evidence="3">
    <location>
        <begin position="113"/>
        <end position="127"/>
    </location>
</feature>
<comment type="subunit">
    <text evidence="1">Component of the mitochondrial ribosome small subunit (28S) which comprises a 12S rRNA and about 30 distinct proteins.</text>
</comment>
<comment type="subcellular location">
    <subcellularLocation>
        <location evidence="1">Mitochondrion</location>
    </subcellularLocation>
</comment>
<comment type="similarity">
    <text evidence="4">Belongs to the universal ribosomal protein uS5 family.</text>
</comment>
<accession>Q99N87</accession>
<dbReference type="EMBL" id="AB049941">
    <property type="protein sequence ID" value="BAB40994.1"/>
    <property type="molecule type" value="mRNA"/>
</dbReference>
<dbReference type="EMBL" id="AK083366">
    <property type="protein sequence ID" value="BAC38885.1"/>
    <property type="molecule type" value="mRNA"/>
</dbReference>
<dbReference type="EMBL" id="BC021947">
    <property type="protein sequence ID" value="AAH21947.1"/>
    <property type="molecule type" value="mRNA"/>
</dbReference>
<dbReference type="CCDS" id="CCDS16706.1"/>
<dbReference type="RefSeq" id="NP_084239.1">
    <property type="nucleotide sequence ID" value="NM_029963.2"/>
</dbReference>
<dbReference type="PDB" id="7PNT">
    <property type="method" value="EM"/>
    <property type="resolution" value="3.19 A"/>
    <property type="chains" value="D=1-432"/>
</dbReference>
<dbReference type="PDB" id="7PNU">
    <property type="method" value="EM"/>
    <property type="resolution" value="3.06 A"/>
    <property type="chains" value="D=1-432"/>
</dbReference>
<dbReference type="PDB" id="7PNV">
    <property type="method" value="EM"/>
    <property type="resolution" value="3.06 A"/>
    <property type="chains" value="D=1-432"/>
</dbReference>
<dbReference type="PDB" id="7PNW">
    <property type="method" value="EM"/>
    <property type="resolution" value="3.09 A"/>
    <property type="chains" value="D=1-432"/>
</dbReference>
<dbReference type="PDBsum" id="7PNT"/>
<dbReference type="PDBsum" id="7PNU"/>
<dbReference type="PDBsum" id="7PNV"/>
<dbReference type="PDBsum" id="7PNW"/>
<dbReference type="EMDB" id="EMD-13551"/>
<dbReference type="EMDB" id="EMD-13552"/>
<dbReference type="EMDB" id="EMD-13553"/>
<dbReference type="EMDB" id="EMD-13554"/>
<dbReference type="SMR" id="Q99N87"/>
<dbReference type="BioGRID" id="218871">
    <property type="interactions" value="4"/>
</dbReference>
<dbReference type="ComplexPortal" id="CPX-5301">
    <property type="entry name" value="28S mitochondrial small ribosomal subunit"/>
</dbReference>
<dbReference type="FunCoup" id="Q99N87">
    <property type="interactions" value="1412"/>
</dbReference>
<dbReference type="STRING" id="10090.ENSMUSP00000028852"/>
<dbReference type="iPTMnet" id="Q99N87"/>
<dbReference type="PhosphoSitePlus" id="Q99N87"/>
<dbReference type="SwissPalm" id="Q99N87"/>
<dbReference type="jPOST" id="Q99N87"/>
<dbReference type="PaxDb" id="10090-ENSMUSP00000028852"/>
<dbReference type="PeptideAtlas" id="Q99N87"/>
<dbReference type="ProteomicsDB" id="262717"/>
<dbReference type="Pumba" id="Q99N87"/>
<dbReference type="Antibodypedia" id="32295">
    <property type="antibodies" value="123 antibodies from 24 providers"/>
</dbReference>
<dbReference type="DNASU" id="77721"/>
<dbReference type="Ensembl" id="ENSMUST00000028852.13">
    <property type="protein sequence ID" value="ENSMUSP00000028852.7"/>
    <property type="gene ID" value="ENSMUSG00000027374.13"/>
</dbReference>
<dbReference type="GeneID" id="77721"/>
<dbReference type="KEGG" id="mmu:77721"/>
<dbReference type="UCSC" id="uc008mfu.1">
    <property type="organism name" value="mouse"/>
</dbReference>
<dbReference type="AGR" id="MGI:1924971"/>
<dbReference type="CTD" id="64969"/>
<dbReference type="MGI" id="MGI:1924971">
    <property type="gene designation" value="Mrps5"/>
</dbReference>
<dbReference type="VEuPathDB" id="HostDB:ENSMUSG00000027374"/>
<dbReference type="eggNOG" id="KOG2646">
    <property type="taxonomic scope" value="Eukaryota"/>
</dbReference>
<dbReference type="GeneTree" id="ENSGT00390000001878"/>
<dbReference type="HOGENOM" id="CLU_050434_0_0_1"/>
<dbReference type="InParanoid" id="Q99N87"/>
<dbReference type="OMA" id="LICHRAI"/>
<dbReference type="OrthoDB" id="309483at2759"/>
<dbReference type="PhylomeDB" id="Q99N87"/>
<dbReference type="TreeFam" id="TF313823"/>
<dbReference type="Reactome" id="R-MMU-5389840">
    <property type="pathway name" value="Mitochondrial translation elongation"/>
</dbReference>
<dbReference type="Reactome" id="R-MMU-5419276">
    <property type="pathway name" value="Mitochondrial translation termination"/>
</dbReference>
<dbReference type="BioGRID-ORCS" id="77721">
    <property type="hits" value="19 hits in 75 CRISPR screens"/>
</dbReference>
<dbReference type="ChiTaRS" id="Mrps5">
    <property type="organism name" value="mouse"/>
</dbReference>
<dbReference type="PRO" id="PR:Q99N87"/>
<dbReference type="Proteomes" id="UP000000589">
    <property type="component" value="Chromosome 2"/>
</dbReference>
<dbReference type="RNAct" id="Q99N87">
    <property type="molecule type" value="protein"/>
</dbReference>
<dbReference type="Bgee" id="ENSMUSG00000027374">
    <property type="expression patterns" value="Expressed in ectoplacental cone and 232 other cell types or tissues"/>
</dbReference>
<dbReference type="ExpressionAtlas" id="Q99N87">
    <property type="expression patterns" value="baseline and differential"/>
</dbReference>
<dbReference type="GO" id="GO:0005743">
    <property type="term" value="C:mitochondrial inner membrane"/>
    <property type="evidence" value="ECO:0000303"/>
    <property type="project" value="ComplexPortal"/>
</dbReference>
<dbReference type="GO" id="GO:0005763">
    <property type="term" value="C:mitochondrial small ribosomal subunit"/>
    <property type="evidence" value="ECO:0000250"/>
    <property type="project" value="UniProtKB"/>
</dbReference>
<dbReference type="GO" id="GO:0005739">
    <property type="term" value="C:mitochondrion"/>
    <property type="evidence" value="ECO:0007005"/>
    <property type="project" value="MGI"/>
</dbReference>
<dbReference type="GO" id="GO:0003723">
    <property type="term" value="F:RNA binding"/>
    <property type="evidence" value="ECO:0007669"/>
    <property type="project" value="InterPro"/>
</dbReference>
<dbReference type="GO" id="GO:0003735">
    <property type="term" value="F:structural constituent of ribosome"/>
    <property type="evidence" value="ECO:0007669"/>
    <property type="project" value="InterPro"/>
</dbReference>
<dbReference type="GO" id="GO:0032543">
    <property type="term" value="P:mitochondrial translation"/>
    <property type="evidence" value="ECO:0000303"/>
    <property type="project" value="ComplexPortal"/>
</dbReference>
<dbReference type="FunFam" id="3.30.160.20:FF:000022">
    <property type="entry name" value="28S ribosomal protein S5, mitochondrial"/>
    <property type="match status" value="1"/>
</dbReference>
<dbReference type="FunFam" id="3.30.230.10:FF:000002">
    <property type="entry name" value="30S ribosomal protein S5"/>
    <property type="match status" value="1"/>
</dbReference>
<dbReference type="Gene3D" id="3.30.160.20">
    <property type="match status" value="1"/>
</dbReference>
<dbReference type="Gene3D" id="3.30.230.10">
    <property type="match status" value="1"/>
</dbReference>
<dbReference type="InterPro" id="IPR020568">
    <property type="entry name" value="Ribosomal_Su5_D2-typ_SF"/>
</dbReference>
<dbReference type="InterPro" id="IPR000851">
    <property type="entry name" value="Ribosomal_uS5"/>
</dbReference>
<dbReference type="InterPro" id="IPR005324">
    <property type="entry name" value="Ribosomal_uS5_C"/>
</dbReference>
<dbReference type="InterPro" id="IPR013810">
    <property type="entry name" value="Ribosomal_uS5_N"/>
</dbReference>
<dbReference type="InterPro" id="IPR018192">
    <property type="entry name" value="Ribosomal_uS5_N_CS"/>
</dbReference>
<dbReference type="InterPro" id="IPR048584">
    <property type="entry name" value="Ribosomal_uS5m_N"/>
</dbReference>
<dbReference type="InterPro" id="IPR014721">
    <property type="entry name" value="Ribsml_uS5_D2-typ_fold_subgr"/>
</dbReference>
<dbReference type="PANTHER" id="PTHR48277">
    <property type="entry name" value="MITOCHONDRIAL RIBOSOMAL PROTEIN S5"/>
    <property type="match status" value="1"/>
</dbReference>
<dbReference type="PANTHER" id="PTHR48277:SF1">
    <property type="entry name" value="MITOCHONDRIAL RIBOSOMAL PROTEIN S5"/>
    <property type="match status" value="1"/>
</dbReference>
<dbReference type="Pfam" id="PF00333">
    <property type="entry name" value="Ribosomal_S5"/>
    <property type="match status" value="1"/>
</dbReference>
<dbReference type="Pfam" id="PF03719">
    <property type="entry name" value="Ribosomal_S5_C"/>
    <property type="match status" value="1"/>
</dbReference>
<dbReference type="Pfam" id="PF21251">
    <property type="entry name" value="Ribosomal_uS5m_N"/>
    <property type="match status" value="1"/>
</dbReference>
<dbReference type="SUPFAM" id="SSF54768">
    <property type="entry name" value="dsRNA-binding domain-like"/>
    <property type="match status" value="1"/>
</dbReference>
<dbReference type="SUPFAM" id="SSF54211">
    <property type="entry name" value="Ribosomal protein S5 domain 2-like"/>
    <property type="match status" value="1"/>
</dbReference>
<dbReference type="PROSITE" id="PS00585">
    <property type="entry name" value="RIBOSOMAL_S5"/>
    <property type="match status" value="1"/>
</dbReference>
<dbReference type="PROSITE" id="PS50881">
    <property type="entry name" value="S5_DSRBD"/>
    <property type="match status" value="1"/>
</dbReference>
<sequence length="432" mass="48207">MAAAVRAAGCLPALCSLQAGHFLSRQLSLNAFPVAATSFLAVKTALSHGSLSSRETRRNHCLTSLSHVLQTQCCVSSPGNWTGQQCRPYSFFTKLTAEELWKGALAETGAGARKGRGKRTKKKKRKDLNRGQIIGEGRSGFLWPGLNVPLIKSGVVQNIGQRSKEEQQKVEATMVEQREEWDRKRKIKVKRERGWSGNTWGGVSIGPPDPGPNGETYEDFDTRILEVRNVFNMTAKEGRKKSVRVLVAVGNGNGAAGFAIGKAADRGDAFRKAKNRAIHYLHYIERYEGHTIFHDISLRFKRTQIRMKKQPRGYGLRCHRAIITICRLIGIKDMYARVTGSMNMLNLTRGLFHGLARQETHQHLADKKGLHVVEFREECGPLPIVVASPHGALSKEPEPEPEVPDTKLDWQDVKAMQGLKRSVWFNLKRPAT</sequence>